<comment type="function">
    <text evidence="1">Catalyzes the hydrolytic deamination of adenine to hypoxanthine. Plays an important role in the purine salvage pathway and in nitrogen catabolism.</text>
</comment>
<comment type="catalytic activity">
    <reaction evidence="1">
        <text>adenine + H2O + H(+) = hypoxanthine + NH4(+)</text>
        <dbReference type="Rhea" id="RHEA:23688"/>
        <dbReference type="ChEBI" id="CHEBI:15377"/>
        <dbReference type="ChEBI" id="CHEBI:15378"/>
        <dbReference type="ChEBI" id="CHEBI:16708"/>
        <dbReference type="ChEBI" id="CHEBI:17368"/>
        <dbReference type="ChEBI" id="CHEBI:28938"/>
        <dbReference type="EC" id="3.5.4.2"/>
    </reaction>
</comment>
<comment type="cofactor">
    <cofactor evidence="1">
        <name>Zn(2+)</name>
        <dbReference type="ChEBI" id="CHEBI:29105"/>
    </cofactor>
    <text evidence="1">Binds 1 zinc ion per subunit.</text>
</comment>
<comment type="similarity">
    <text evidence="1">Belongs to the metallo-dependent hydrolases superfamily. Adenosine and AMP deaminases family. Adenine deaminase type 2 subfamily.</text>
</comment>
<evidence type="ECO:0000255" key="1">
    <source>
        <dbReference type="HAMAP-Rule" id="MF_01962"/>
    </source>
</evidence>
<sequence length="350" mass="38712">MTTTTVTSTPLAEKTVLAPKAELHIHIEGSLEPELIFALAERNGVKLAYDSIDALRAAYAFTDLQSFLDIYYAGASVLLHEQDFYDMTMAYVERCLADNVVHSEIFFDPQTHTERGVPIATVVAGIERALADAEQRGMSSKLILCFLRHLSEEDALATFEEARPLFEQYRHRLIGVGLDSSERGHPPSKFERVFAKARSLGLKLVAHAGEEGPPSYIYEALDLLKVDRVDHGVRSIEDPALVTRLADSRVALTVCPLSNLKLCVFDDLTKHTLKDLLDRGVAVTVNSDDPAYFGGYVNANYLATIDALKLNDAEVYTIIRNSFEASFVTPGQRSELIAKLDAHWHPGGPH</sequence>
<organism>
    <name type="scientific">Paraburkholderia xenovorans (strain LB400)</name>
    <dbReference type="NCBI Taxonomy" id="266265"/>
    <lineage>
        <taxon>Bacteria</taxon>
        <taxon>Pseudomonadati</taxon>
        <taxon>Pseudomonadota</taxon>
        <taxon>Betaproteobacteria</taxon>
        <taxon>Burkholderiales</taxon>
        <taxon>Burkholderiaceae</taxon>
        <taxon>Paraburkholderia</taxon>
    </lineage>
</organism>
<dbReference type="EC" id="3.5.4.2" evidence="1"/>
<dbReference type="EMBL" id="CP000270">
    <property type="protein sequence ID" value="ABE31999.1"/>
    <property type="molecule type" value="Genomic_DNA"/>
</dbReference>
<dbReference type="RefSeq" id="WP_011489511.1">
    <property type="nucleotide sequence ID" value="NC_007951.1"/>
</dbReference>
<dbReference type="SMR" id="Q13V90"/>
<dbReference type="STRING" id="266265.Bxe_A0947"/>
<dbReference type="KEGG" id="bxb:DR64_3109"/>
<dbReference type="KEGG" id="bxe:Bxe_A0947"/>
<dbReference type="PATRIC" id="fig|266265.5.peg.3636"/>
<dbReference type="eggNOG" id="COG1816">
    <property type="taxonomic scope" value="Bacteria"/>
</dbReference>
<dbReference type="OrthoDB" id="105475at2"/>
<dbReference type="Proteomes" id="UP000001817">
    <property type="component" value="Chromosome 1"/>
</dbReference>
<dbReference type="GO" id="GO:0005829">
    <property type="term" value="C:cytosol"/>
    <property type="evidence" value="ECO:0007669"/>
    <property type="project" value="TreeGrafter"/>
</dbReference>
<dbReference type="GO" id="GO:0000034">
    <property type="term" value="F:adenine deaminase activity"/>
    <property type="evidence" value="ECO:0007669"/>
    <property type="project" value="UniProtKB-UniRule"/>
</dbReference>
<dbReference type="GO" id="GO:0008270">
    <property type="term" value="F:zinc ion binding"/>
    <property type="evidence" value="ECO:0007669"/>
    <property type="project" value="UniProtKB-UniRule"/>
</dbReference>
<dbReference type="GO" id="GO:0006146">
    <property type="term" value="P:adenine catabolic process"/>
    <property type="evidence" value="ECO:0007669"/>
    <property type="project" value="UniProtKB-UniRule"/>
</dbReference>
<dbReference type="GO" id="GO:0043103">
    <property type="term" value="P:hypoxanthine salvage"/>
    <property type="evidence" value="ECO:0007669"/>
    <property type="project" value="UniProtKB-UniRule"/>
</dbReference>
<dbReference type="GO" id="GO:0009117">
    <property type="term" value="P:nucleotide metabolic process"/>
    <property type="evidence" value="ECO:0007669"/>
    <property type="project" value="UniProtKB-KW"/>
</dbReference>
<dbReference type="CDD" id="cd01320">
    <property type="entry name" value="ADA"/>
    <property type="match status" value="1"/>
</dbReference>
<dbReference type="FunFam" id="3.20.20.140:FF:000039">
    <property type="entry name" value="Adenine deaminase"/>
    <property type="match status" value="1"/>
</dbReference>
<dbReference type="Gene3D" id="3.20.20.140">
    <property type="entry name" value="Metal-dependent hydrolases"/>
    <property type="match status" value="1"/>
</dbReference>
<dbReference type="HAMAP" id="MF_01962">
    <property type="entry name" value="Adenine_deaminase"/>
    <property type="match status" value="1"/>
</dbReference>
<dbReference type="InterPro" id="IPR001365">
    <property type="entry name" value="A_deaminase_dom"/>
</dbReference>
<dbReference type="InterPro" id="IPR028892">
    <property type="entry name" value="ADE"/>
</dbReference>
<dbReference type="InterPro" id="IPR006330">
    <property type="entry name" value="Ado/ade_deaminase"/>
</dbReference>
<dbReference type="InterPro" id="IPR032466">
    <property type="entry name" value="Metal_Hydrolase"/>
</dbReference>
<dbReference type="NCBIfam" id="TIGR01430">
    <property type="entry name" value="aden_deam"/>
    <property type="match status" value="1"/>
</dbReference>
<dbReference type="NCBIfam" id="NF006850">
    <property type="entry name" value="PRK09358.1-6"/>
    <property type="match status" value="1"/>
</dbReference>
<dbReference type="PANTHER" id="PTHR43114">
    <property type="entry name" value="ADENINE DEAMINASE"/>
    <property type="match status" value="1"/>
</dbReference>
<dbReference type="PANTHER" id="PTHR43114:SF6">
    <property type="entry name" value="ADENINE DEAMINASE"/>
    <property type="match status" value="1"/>
</dbReference>
<dbReference type="Pfam" id="PF00962">
    <property type="entry name" value="A_deaminase"/>
    <property type="match status" value="1"/>
</dbReference>
<dbReference type="SUPFAM" id="SSF51556">
    <property type="entry name" value="Metallo-dependent hydrolases"/>
    <property type="match status" value="1"/>
</dbReference>
<keyword id="KW-0378">Hydrolase</keyword>
<keyword id="KW-0479">Metal-binding</keyword>
<keyword id="KW-0546">Nucleotide metabolism</keyword>
<keyword id="KW-1185">Reference proteome</keyword>
<keyword id="KW-0862">Zinc</keyword>
<protein>
    <recommendedName>
        <fullName evidence="1">Adenine deaminase</fullName>
        <shortName evidence="1">ADE</shortName>
        <ecNumber evidence="1">3.5.4.2</ecNumber>
    </recommendedName>
    <alternativeName>
        <fullName evidence="1">Adenine aminohydrolase</fullName>
        <shortName evidence="1">AAH</shortName>
    </alternativeName>
</protein>
<name>ADE_PARXL</name>
<accession>Q13V90</accession>
<gene>
    <name type="ordered locus">Bxeno_A3461</name>
    <name type="ORF">Bxe_A0947</name>
</gene>
<feature type="chain" id="PRO_1000081921" description="Adenine deaminase">
    <location>
        <begin position="1"/>
        <end position="350"/>
    </location>
</feature>
<feature type="active site" description="Proton donor" evidence="1">
    <location>
        <position position="210"/>
    </location>
</feature>
<feature type="binding site" evidence="1">
    <location>
        <position position="24"/>
    </location>
    <ligand>
        <name>Zn(2+)</name>
        <dbReference type="ChEBI" id="CHEBI:29105"/>
        <note>catalytic</note>
    </ligand>
</feature>
<feature type="binding site" evidence="1">
    <location>
        <position position="26"/>
    </location>
    <ligand>
        <name>Zn(2+)</name>
        <dbReference type="ChEBI" id="CHEBI:29105"/>
        <note>catalytic</note>
    </ligand>
</feature>
<feature type="binding site" evidence="1">
    <location>
        <position position="207"/>
    </location>
    <ligand>
        <name>Zn(2+)</name>
        <dbReference type="ChEBI" id="CHEBI:29105"/>
        <note>catalytic</note>
    </ligand>
</feature>
<feature type="binding site" evidence="1">
    <location>
        <position position="288"/>
    </location>
    <ligand>
        <name>Zn(2+)</name>
        <dbReference type="ChEBI" id="CHEBI:29105"/>
        <note>catalytic</note>
    </ligand>
</feature>
<feature type="binding site" evidence="1">
    <location>
        <position position="289"/>
    </location>
    <ligand>
        <name>substrate</name>
    </ligand>
</feature>
<feature type="site" description="Important for catalytic activity" evidence="1">
    <location>
        <position position="231"/>
    </location>
</feature>
<reference key="1">
    <citation type="journal article" date="2006" name="Proc. Natl. Acad. Sci. U.S.A.">
        <title>Burkholderia xenovorans LB400 harbors a multi-replicon, 9.73-Mbp genome shaped for versatility.</title>
        <authorList>
            <person name="Chain P.S.G."/>
            <person name="Denef V.J."/>
            <person name="Konstantinidis K.T."/>
            <person name="Vergez L.M."/>
            <person name="Agullo L."/>
            <person name="Reyes V.L."/>
            <person name="Hauser L."/>
            <person name="Cordova M."/>
            <person name="Gomez L."/>
            <person name="Gonzalez M."/>
            <person name="Land M."/>
            <person name="Lao V."/>
            <person name="Larimer F."/>
            <person name="LiPuma J.J."/>
            <person name="Mahenthiralingam E."/>
            <person name="Malfatti S.A."/>
            <person name="Marx C.J."/>
            <person name="Parnell J.J."/>
            <person name="Ramette A."/>
            <person name="Richardson P."/>
            <person name="Seeger M."/>
            <person name="Smith D."/>
            <person name="Spilker T."/>
            <person name="Sul W.J."/>
            <person name="Tsoi T.V."/>
            <person name="Ulrich L.E."/>
            <person name="Zhulin I.B."/>
            <person name="Tiedje J.M."/>
        </authorList>
    </citation>
    <scope>NUCLEOTIDE SEQUENCE [LARGE SCALE GENOMIC DNA]</scope>
    <source>
        <strain>LB400</strain>
    </source>
</reference>
<proteinExistence type="inferred from homology"/>